<sequence>MTEFDVTDGVHDVIEDTELPRRLKDEVLATAEERGVTKSQANEIATAVEAQYLDTRVDPLDPVGTVSAQSIGEPGTQMTMNTFHYAGVAEMDVTQGLPRLIELVDARKTPDTPVMEVYLEDEYAEERERAHEVVWKIEATKILALGDISTNVADMVVRIDLNEDTLQERWPRVDSTTQIAGEVAETIEGNLGVTVTQDGTILEFGPSEPSYRELLQLVEQLRDIVFKGIEEVSRVVIRREETERGEEFVLYTEGSAFKKALKIEGVDATRTSCNNIHEVHKTLGIEAAREAIINETMTTLEEQGLDDVNIRHLMLVADIMTNDGTIESIGRHGISGNKNSVLARAAFEVTVNHLLDAAIHGESDDLDGVIENVIVGKPVRLGTGDVDLRMGATQTSD</sequence>
<organism>
    <name type="scientific">Halobacterium salinarum (strain ATCC 29341 / DSM 671 / R1)</name>
    <dbReference type="NCBI Taxonomy" id="478009"/>
    <lineage>
        <taxon>Archaea</taxon>
        <taxon>Methanobacteriati</taxon>
        <taxon>Methanobacteriota</taxon>
        <taxon>Stenosarchaea group</taxon>
        <taxon>Halobacteria</taxon>
        <taxon>Halobacteriales</taxon>
        <taxon>Halobacteriaceae</taxon>
        <taxon>Halobacterium</taxon>
        <taxon>Halobacterium salinarum NRC-34001</taxon>
    </lineage>
</organism>
<proteinExistence type="evidence at protein level"/>
<feature type="initiator methionine" description="Removed" evidence="2">
    <location>
        <position position="1"/>
    </location>
</feature>
<feature type="chain" id="PRO_1000194737" description="DNA-directed RNA polymerase subunit Rpo1C">
    <location>
        <begin position="2"/>
        <end position="397"/>
    </location>
</feature>
<comment type="function">
    <text evidence="1">DNA-dependent RNA polymerase (RNAP) catalyzes the transcription of DNA into RNA using the four ribonucleoside triphosphates as substrates. Forms part of the jaw domain.</text>
</comment>
<comment type="catalytic activity">
    <reaction evidence="1">
        <text>RNA(n) + a ribonucleoside 5'-triphosphate = RNA(n+1) + diphosphate</text>
        <dbReference type="Rhea" id="RHEA:21248"/>
        <dbReference type="Rhea" id="RHEA-COMP:14527"/>
        <dbReference type="Rhea" id="RHEA-COMP:17342"/>
        <dbReference type="ChEBI" id="CHEBI:33019"/>
        <dbReference type="ChEBI" id="CHEBI:61557"/>
        <dbReference type="ChEBI" id="CHEBI:140395"/>
        <dbReference type="EC" id="2.7.7.6"/>
    </reaction>
</comment>
<comment type="subunit">
    <text evidence="1 2">Part of the RNA polymerase complex.</text>
</comment>
<comment type="subcellular location">
    <subcellularLocation>
        <location evidence="1">Cytoplasm</location>
    </subcellularLocation>
</comment>
<comment type="similarity">
    <text evidence="1">Belongs to the RNA polymerase beta' chain family.</text>
</comment>
<gene>
    <name evidence="1" type="primary">rpo1C</name>
    <name evidence="1" type="synonym">rpoA2</name>
    <name type="ordered locus">OE_4739R</name>
</gene>
<evidence type="ECO:0000255" key="1">
    <source>
        <dbReference type="HAMAP-Rule" id="MF_00411"/>
    </source>
</evidence>
<evidence type="ECO:0000269" key="2">
    <source>
    </source>
</evidence>
<evidence type="ECO:0000303" key="3">
    <source>
    </source>
</evidence>
<reference key="1">
    <citation type="journal article" date="1989" name="J. Mol. Biol.">
        <title>Sequence, organization, transcription and evolution of RNA polymerase subunit genes from the archaebacterial extreme halophiles Halobacterium halobium and Halococcus morrhuae.</title>
        <authorList>
            <person name="Leffers H."/>
            <person name="Gropp F."/>
            <person name="Lottspeich F."/>
            <person name="Zillig W."/>
            <person name="Garrett R.A."/>
        </authorList>
    </citation>
    <scope>NUCLEOTIDE SEQUENCE [GENOMIC DNA]</scope>
    <scope>PROTEIN SEQUENCE OF 2-10</scope>
    <scope>SUBUNIT</scope>
    <source>
        <strain>ATCC 29341 / DSM 671 / R1</strain>
    </source>
</reference>
<reference key="2">
    <citation type="journal article" date="2008" name="Genomics">
        <title>Evolution in the laboratory: the genome of Halobacterium salinarum strain R1 compared to that of strain NRC-1.</title>
        <authorList>
            <person name="Pfeiffer F."/>
            <person name="Schuster S.C."/>
            <person name="Broicher A."/>
            <person name="Falb M."/>
            <person name="Palm P."/>
            <person name="Rodewald K."/>
            <person name="Ruepp A."/>
            <person name="Soppa J."/>
            <person name="Tittor J."/>
            <person name="Oesterhelt D."/>
        </authorList>
    </citation>
    <scope>NUCLEOTIDE SEQUENCE [LARGE SCALE GENOMIC DNA]</scope>
    <source>
        <strain>ATCC 29341 / DSM 671 / R1</strain>
    </source>
</reference>
<protein>
    <recommendedName>
        <fullName evidence="1">DNA-directed RNA polymerase subunit Rpo1C</fullName>
        <ecNumber evidence="1">2.7.7.6</ecNumber>
    </recommendedName>
    <alternativeName>
        <fullName evidence="1">DNA-directed RNA polymerase subunit A''</fullName>
    </alternativeName>
    <alternativeName>
        <fullName evidence="3">DNA-directed RNA polymerase subunit C</fullName>
        <shortName evidence="3">Subunit C</shortName>
    </alternativeName>
</protein>
<dbReference type="EC" id="2.7.7.6" evidence="1"/>
<dbReference type="EMBL" id="X57144">
    <property type="protein sequence ID" value="CAA40427.1"/>
    <property type="molecule type" value="Genomic_DNA"/>
</dbReference>
<dbReference type="EMBL" id="AM774415">
    <property type="protein sequence ID" value="CAP15002.1"/>
    <property type="molecule type" value="Genomic_DNA"/>
</dbReference>
<dbReference type="PIR" id="S03577">
    <property type="entry name" value="S03577"/>
</dbReference>
<dbReference type="RefSeq" id="WP_010903995.1">
    <property type="nucleotide sequence ID" value="NC_010364.1"/>
</dbReference>
<dbReference type="SMR" id="B0R8D3"/>
<dbReference type="EnsemblBacteria" id="CAP15002">
    <property type="protein sequence ID" value="CAP15002"/>
    <property type="gene ID" value="OE_4739R"/>
</dbReference>
<dbReference type="GeneID" id="68695143"/>
<dbReference type="KEGG" id="hsl:OE_4739R"/>
<dbReference type="HOGENOM" id="CLU_037097_1_0_2"/>
<dbReference type="PhylomeDB" id="B0R8D3"/>
<dbReference type="Proteomes" id="UP000001321">
    <property type="component" value="Chromosome"/>
</dbReference>
<dbReference type="GO" id="GO:0005737">
    <property type="term" value="C:cytoplasm"/>
    <property type="evidence" value="ECO:0007669"/>
    <property type="project" value="UniProtKB-SubCell"/>
</dbReference>
<dbReference type="GO" id="GO:0000428">
    <property type="term" value="C:DNA-directed RNA polymerase complex"/>
    <property type="evidence" value="ECO:0007669"/>
    <property type="project" value="UniProtKB-KW"/>
</dbReference>
<dbReference type="GO" id="GO:0003677">
    <property type="term" value="F:DNA binding"/>
    <property type="evidence" value="ECO:0007669"/>
    <property type="project" value="UniProtKB-UniRule"/>
</dbReference>
<dbReference type="GO" id="GO:0003899">
    <property type="term" value="F:DNA-directed RNA polymerase activity"/>
    <property type="evidence" value="ECO:0007669"/>
    <property type="project" value="UniProtKB-UniRule"/>
</dbReference>
<dbReference type="GO" id="GO:0006351">
    <property type="term" value="P:DNA-templated transcription"/>
    <property type="evidence" value="ECO:0007669"/>
    <property type="project" value="UniProtKB-UniRule"/>
</dbReference>
<dbReference type="CDD" id="cd06528">
    <property type="entry name" value="RNAP_A"/>
    <property type="match status" value="1"/>
</dbReference>
<dbReference type="Gene3D" id="1.10.150.390">
    <property type="match status" value="1"/>
</dbReference>
<dbReference type="HAMAP" id="MF_00411">
    <property type="entry name" value="RNApol_arch_Rpo1C"/>
    <property type="match status" value="1"/>
</dbReference>
<dbReference type="InterPro" id="IPR045867">
    <property type="entry name" value="DNA-dir_RpoC_beta_prime"/>
</dbReference>
<dbReference type="InterPro" id="IPR007081">
    <property type="entry name" value="RNA_pol_Rpb1_5"/>
</dbReference>
<dbReference type="InterPro" id="IPR012757">
    <property type="entry name" value="RPO1C"/>
</dbReference>
<dbReference type="NCBIfam" id="TIGR02389">
    <property type="entry name" value="RNA_pol_rpoA2"/>
    <property type="match status" value="1"/>
</dbReference>
<dbReference type="PANTHER" id="PTHR19376">
    <property type="entry name" value="DNA-DIRECTED RNA POLYMERASE"/>
    <property type="match status" value="1"/>
</dbReference>
<dbReference type="PANTHER" id="PTHR19376:SF32">
    <property type="entry name" value="DNA-DIRECTED RNA POLYMERASE III SUBUNIT RPC1"/>
    <property type="match status" value="1"/>
</dbReference>
<dbReference type="Pfam" id="PF04998">
    <property type="entry name" value="RNA_pol_Rpb1_5"/>
    <property type="match status" value="1"/>
</dbReference>
<dbReference type="SUPFAM" id="SSF64484">
    <property type="entry name" value="beta and beta-prime subunits of DNA dependent RNA-polymerase"/>
    <property type="match status" value="1"/>
</dbReference>
<accession>B0R8D3</accession>
<accession>P15354</accession>
<accession>Q9HM80</accession>
<name>RPO1C_HALS3</name>
<keyword id="KW-0963">Cytoplasm</keyword>
<keyword id="KW-0903">Direct protein sequencing</keyword>
<keyword id="KW-0238">DNA-binding</keyword>
<keyword id="KW-0240">DNA-directed RNA polymerase</keyword>
<keyword id="KW-0548">Nucleotidyltransferase</keyword>
<keyword id="KW-0804">Transcription</keyword>
<keyword id="KW-0808">Transferase</keyword>